<protein>
    <recommendedName>
        <fullName>Uncharacterized 11.4 kDa protein in trnR-chlB intergenic region</fullName>
    </recommendedName>
    <alternativeName>
        <fullName>ORF101</fullName>
    </alternativeName>
</protein>
<keyword id="KW-0150">Chloroplast</keyword>
<keyword id="KW-0934">Plastid</keyword>
<keyword id="KW-1185">Reference proteome</keyword>
<accession>P37825</accession>
<sequence>MYLGISGRSPYGSSVAVACQLPNINISGQIYLLLPPSEYINIGFNTRQWQYHCHWRPKFTCPKGKEAVAVPLPLKFICPKGTSCQLPIFIYSEVYLYASEY</sequence>
<feature type="chain" id="PRO_0000217500" description="Uncharacterized 11.4 kDa protein in trnR-chlB intergenic region">
    <location>
        <begin position="1"/>
        <end position="101"/>
    </location>
</feature>
<organism>
    <name type="scientific">Chlamydomonas reinhardtii</name>
    <name type="common">Chlamydomonas smithii</name>
    <dbReference type="NCBI Taxonomy" id="3055"/>
    <lineage>
        <taxon>Eukaryota</taxon>
        <taxon>Viridiplantae</taxon>
        <taxon>Chlorophyta</taxon>
        <taxon>core chlorophytes</taxon>
        <taxon>Chlorophyceae</taxon>
        <taxon>CS clade</taxon>
        <taxon>Chlamydomonadales</taxon>
        <taxon>Chlamydomonadaceae</taxon>
        <taxon>Chlamydomonas</taxon>
    </lineage>
</organism>
<name>YCX5_CHLRE</name>
<geneLocation type="chloroplast"/>
<comment type="subcellular location">
    <subcellularLocation>
        <location>Plastid</location>
        <location>Chloroplast</location>
    </subcellularLocation>
</comment>
<proteinExistence type="predicted"/>
<reference key="1">
    <citation type="journal article" date="1993" name="Plant Mol. Biol.">
        <title>Chloroplast chlB gene is required for light-independent chlorophyll accumulation in Chlamydomonas reinhardtii.</title>
        <authorList>
            <person name="Liu X.-Q."/>
            <person name="Xu H."/>
            <person name="Huang C."/>
        </authorList>
    </citation>
    <scope>NUCLEOTIDE SEQUENCE [GENOMIC DNA]</scope>
    <source>
        <strain>137c / CC-125</strain>
    </source>
</reference>
<reference key="2">
    <citation type="journal article" date="2009" name="BMC Evol. Biol.">
        <title>Nucleotide diversity of the Chlamydomonas reinhardtii plastid genome: addressing the mutational-hazard hypothesis.</title>
        <authorList>
            <person name="Smith D.R."/>
            <person name="Lee R.W."/>
        </authorList>
    </citation>
    <scope>NUCLEOTIDE SEQUENCE [LARGE SCALE GENOMIC DNA]</scope>
    <source>
        <strain>CC-503</strain>
    </source>
</reference>
<reference key="3">
    <citation type="journal article" date="2002" name="Plant Cell">
        <title>The Chlamydomonas reinhardtii plastid chromosome: islands of genes in a sea of repeats.</title>
        <authorList>
            <person name="Maul J.E."/>
            <person name="Lilly J.W."/>
            <person name="Cui L."/>
            <person name="dePamphilis C.W."/>
            <person name="Miller W."/>
            <person name="Harris E.H."/>
            <person name="Stern D.B."/>
        </authorList>
    </citation>
    <scope>IDENTIFICATION</scope>
    <scope>COMPLETE PLASTID GENOME</scope>
</reference>
<dbReference type="EMBL" id="FJ423446">
    <property type="status" value="NOT_ANNOTATED_CDS"/>
    <property type="molecule type" value="Genomic_DNA"/>
</dbReference>
<dbReference type="EMBL" id="BK000554">
    <property type="status" value="NOT_ANNOTATED_CDS"/>
    <property type="molecule type" value="Genomic_DNA"/>
</dbReference>
<dbReference type="PIR" id="S39490">
    <property type="entry name" value="S39490"/>
</dbReference>
<dbReference type="STRING" id="3055.P37825"/>
<dbReference type="InParanoid" id="P37825"/>
<dbReference type="Proteomes" id="UP000006906">
    <property type="component" value="Chloroplast"/>
</dbReference>
<dbReference type="GO" id="GO:0009507">
    <property type="term" value="C:chloroplast"/>
    <property type="evidence" value="ECO:0007669"/>
    <property type="project" value="UniProtKB-SubCell"/>
</dbReference>